<sequence length="327" mass="35821">MAVYTDVAADELADFLSRYDIGDLLSYKGIAEGVENSNFLLHTSRGYFILTLYEKRVARDDLPFFLSLMTHLADSGINCPQPVADREGRTLATLAGRPAAIISFLDGVWPRKPSVVHCAGVGQALAKMHLAGRDFAMKRANALSVAGWRPLFAAAEARADEVQPGLRDFLAAELSYLESGVWPSDLPQGLIHADLFPDNVFFIGDEVSGIIDFTFACNDLLAYDVAICLNAWCFEADHAFNVTKARALLSAYTRERPLDAAEQAALPLLARGAALRFLLTRLVDWLNVPEGALVKPKDPMEYVRKLRFQQNVAGIRDYGVEIAGAVA</sequence>
<evidence type="ECO:0000255" key="1">
    <source>
        <dbReference type="HAMAP-Rule" id="MF_00301"/>
    </source>
</evidence>
<reference key="1">
    <citation type="journal article" date="2004" name="Nat. Biotechnol.">
        <title>Complete genome sequence of the metabolically versatile photosynthetic bacterium Rhodopseudomonas palustris.</title>
        <authorList>
            <person name="Larimer F.W."/>
            <person name="Chain P."/>
            <person name="Hauser L."/>
            <person name="Lamerdin J.E."/>
            <person name="Malfatti S."/>
            <person name="Do L."/>
            <person name="Land M.L."/>
            <person name="Pelletier D.A."/>
            <person name="Beatty J.T."/>
            <person name="Lang A.S."/>
            <person name="Tabita F.R."/>
            <person name="Gibson J.L."/>
            <person name="Hanson T.E."/>
            <person name="Bobst C."/>
            <person name="Torres y Torres J.L."/>
            <person name="Peres C."/>
            <person name="Harrison F.H."/>
            <person name="Gibson J."/>
            <person name="Harwood C.S."/>
        </authorList>
    </citation>
    <scope>NUCLEOTIDE SEQUENCE [LARGE SCALE GENOMIC DNA]</scope>
    <source>
        <strain>ATCC BAA-98 / CGA009</strain>
    </source>
</reference>
<name>KHSE_RHOPA</name>
<protein>
    <recommendedName>
        <fullName evidence="1">Homoserine kinase</fullName>
        <shortName evidence="1">HK</shortName>
        <shortName evidence="1">HSK</shortName>
        <ecNumber evidence="1">2.7.1.39</ecNumber>
    </recommendedName>
</protein>
<gene>
    <name evidence="1" type="primary">thrB</name>
    <name type="ordered locus">RPA4270</name>
</gene>
<dbReference type="EC" id="2.7.1.39" evidence="1"/>
<dbReference type="EMBL" id="BX572606">
    <property type="protein sequence ID" value="CAE29711.1"/>
    <property type="molecule type" value="Genomic_DNA"/>
</dbReference>
<dbReference type="RefSeq" id="WP_011159805.1">
    <property type="nucleotide sequence ID" value="NZ_CP116810.1"/>
</dbReference>
<dbReference type="SMR" id="Q6N1Y2"/>
<dbReference type="STRING" id="258594.RPA4270"/>
<dbReference type="GeneID" id="66895396"/>
<dbReference type="eggNOG" id="COG2334">
    <property type="taxonomic scope" value="Bacteria"/>
</dbReference>
<dbReference type="HOGENOM" id="CLU_053300_1_0_5"/>
<dbReference type="PhylomeDB" id="Q6N1Y2"/>
<dbReference type="UniPathway" id="UPA00050">
    <property type="reaction ID" value="UER00064"/>
</dbReference>
<dbReference type="GO" id="GO:0005524">
    <property type="term" value="F:ATP binding"/>
    <property type="evidence" value="ECO:0007669"/>
    <property type="project" value="UniProtKB-KW"/>
</dbReference>
<dbReference type="GO" id="GO:0004413">
    <property type="term" value="F:homoserine kinase activity"/>
    <property type="evidence" value="ECO:0007669"/>
    <property type="project" value="UniProtKB-UniRule"/>
</dbReference>
<dbReference type="GO" id="GO:0009088">
    <property type="term" value="P:threonine biosynthetic process"/>
    <property type="evidence" value="ECO:0007669"/>
    <property type="project" value="UniProtKB-UniRule"/>
</dbReference>
<dbReference type="CDD" id="cd05153">
    <property type="entry name" value="HomoserineK_II"/>
    <property type="match status" value="1"/>
</dbReference>
<dbReference type="FunFam" id="3.90.1200.10:FF:000041">
    <property type="entry name" value="Homoserine kinase"/>
    <property type="match status" value="1"/>
</dbReference>
<dbReference type="Gene3D" id="3.90.1200.10">
    <property type="match status" value="1"/>
</dbReference>
<dbReference type="Gene3D" id="3.30.200.20">
    <property type="entry name" value="Phosphorylase Kinase, domain 1"/>
    <property type="match status" value="1"/>
</dbReference>
<dbReference type="HAMAP" id="MF_00301">
    <property type="entry name" value="Homoser_kinase_2"/>
    <property type="match status" value="1"/>
</dbReference>
<dbReference type="InterPro" id="IPR002575">
    <property type="entry name" value="Aminoglycoside_PTrfase"/>
</dbReference>
<dbReference type="InterPro" id="IPR005280">
    <property type="entry name" value="Homoserine_kinase_II"/>
</dbReference>
<dbReference type="InterPro" id="IPR011009">
    <property type="entry name" value="Kinase-like_dom_sf"/>
</dbReference>
<dbReference type="InterPro" id="IPR050249">
    <property type="entry name" value="Pseudomonas-type_ThrB"/>
</dbReference>
<dbReference type="NCBIfam" id="NF003558">
    <property type="entry name" value="PRK05231.1"/>
    <property type="match status" value="1"/>
</dbReference>
<dbReference type="NCBIfam" id="TIGR00938">
    <property type="entry name" value="thrB_alt"/>
    <property type="match status" value="1"/>
</dbReference>
<dbReference type="PANTHER" id="PTHR21064:SF6">
    <property type="entry name" value="AMINOGLYCOSIDE PHOSPHOTRANSFERASE DOMAIN-CONTAINING PROTEIN"/>
    <property type="match status" value="1"/>
</dbReference>
<dbReference type="PANTHER" id="PTHR21064">
    <property type="entry name" value="AMINOGLYCOSIDE PHOSPHOTRANSFERASE DOMAIN-CONTAINING PROTEIN-RELATED"/>
    <property type="match status" value="1"/>
</dbReference>
<dbReference type="Pfam" id="PF01636">
    <property type="entry name" value="APH"/>
    <property type="match status" value="1"/>
</dbReference>
<dbReference type="SUPFAM" id="SSF56112">
    <property type="entry name" value="Protein kinase-like (PK-like)"/>
    <property type="match status" value="1"/>
</dbReference>
<organism>
    <name type="scientific">Rhodopseudomonas palustris (strain ATCC BAA-98 / CGA009)</name>
    <dbReference type="NCBI Taxonomy" id="258594"/>
    <lineage>
        <taxon>Bacteria</taxon>
        <taxon>Pseudomonadati</taxon>
        <taxon>Pseudomonadota</taxon>
        <taxon>Alphaproteobacteria</taxon>
        <taxon>Hyphomicrobiales</taxon>
        <taxon>Nitrobacteraceae</taxon>
        <taxon>Rhodopseudomonas</taxon>
    </lineage>
</organism>
<feature type="chain" id="PRO_0000172198" description="Homoserine kinase">
    <location>
        <begin position="1"/>
        <end position="327"/>
    </location>
</feature>
<proteinExistence type="inferred from homology"/>
<comment type="catalytic activity">
    <reaction evidence="1">
        <text>L-homoserine + ATP = O-phospho-L-homoserine + ADP + H(+)</text>
        <dbReference type="Rhea" id="RHEA:13985"/>
        <dbReference type="ChEBI" id="CHEBI:15378"/>
        <dbReference type="ChEBI" id="CHEBI:30616"/>
        <dbReference type="ChEBI" id="CHEBI:57476"/>
        <dbReference type="ChEBI" id="CHEBI:57590"/>
        <dbReference type="ChEBI" id="CHEBI:456216"/>
        <dbReference type="EC" id="2.7.1.39"/>
    </reaction>
</comment>
<comment type="pathway">
    <text evidence="1">Amino-acid biosynthesis; L-threonine biosynthesis; L-threonine from L-aspartate: step 4/5.</text>
</comment>
<comment type="similarity">
    <text evidence="1">Belongs to the pseudomonas-type ThrB family.</text>
</comment>
<keyword id="KW-0028">Amino-acid biosynthesis</keyword>
<keyword id="KW-0067">ATP-binding</keyword>
<keyword id="KW-0418">Kinase</keyword>
<keyword id="KW-0547">Nucleotide-binding</keyword>
<keyword id="KW-0791">Threonine biosynthesis</keyword>
<keyword id="KW-0808">Transferase</keyword>
<accession>Q6N1Y2</accession>